<reference key="1">
    <citation type="submission" date="2007-04" db="EMBL/GenBank/DDBJ databases">
        <title>Complete sequence of Shewanella putrefaciens CN-32.</title>
        <authorList>
            <consortium name="US DOE Joint Genome Institute"/>
            <person name="Copeland A."/>
            <person name="Lucas S."/>
            <person name="Lapidus A."/>
            <person name="Barry K."/>
            <person name="Detter J.C."/>
            <person name="Glavina del Rio T."/>
            <person name="Hammon N."/>
            <person name="Israni S."/>
            <person name="Dalin E."/>
            <person name="Tice H."/>
            <person name="Pitluck S."/>
            <person name="Chain P."/>
            <person name="Malfatti S."/>
            <person name="Shin M."/>
            <person name="Vergez L."/>
            <person name="Schmutz J."/>
            <person name="Larimer F."/>
            <person name="Land M."/>
            <person name="Hauser L."/>
            <person name="Kyrpides N."/>
            <person name="Mikhailova N."/>
            <person name="Romine M.F."/>
            <person name="Fredrickson J."/>
            <person name="Tiedje J."/>
            <person name="Richardson P."/>
        </authorList>
    </citation>
    <scope>NUCLEOTIDE SEQUENCE [LARGE SCALE GENOMIC DNA]</scope>
    <source>
        <strain>CN-32 / ATCC BAA-453</strain>
    </source>
</reference>
<dbReference type="EMBL" id="CP000681">
    <property type="protein sequence ID" value="ABP77428.1"/>
    <property type="molecule type" value="Genomic_DNA"/>
</dbReference>
<dbReference type="SMR" id="A4YBU5"/>
<dbReference type="STRING" id="319224.Sputcn32_3720"/>
<dbReference type="KEGG" id="spc:Sputcn32_3720"/>
<dbReference type="eggNOG" id="COG1058">
    <property type="taxonomic scope" value="Bacteria"/>
</dbReference>
<dbReference type="eggNOG" id="COG1546">
    <property type="taxonomic scope" value="Bacteria"/>
</dbReference>
<dbReference type="HOGENOM" id="CLU_030805_9_2_6"/>
<dbReference type="CDD" id="cd00885">
    <property type="entry name" value="cinA"/>
    <property type="match status" value="1"/>
</dbReference>
<dbReference type="Gene3D" id="3.90.950.20">
    <property type="entry name" value="CinA-like"/>
    <property type="match status" value="1"/>
</dbReference>
<dbReference type="Gene3D" id="3.40.980.10">
    <property type="entry name" value="MoaB/Mog-like domain"/>
    <property type="match status" value="1"/>
</dbReference>
<dbReference type="HAMAP" id="MF_00226_B">
    <property type="entry name" value="CinA_B"/>
    <property type="match status" value="1"/>
</dbReference>
<dbReference type="InterPro" id="IPR050101">
    <property type="entry name" value="CinA"/>
</dbReference>
<dbReference type="InterPro" id="IPR036653">
    <property type="entry name" value="CinA-like_C"/>
</dbReference>
<dbReference type="InterPro" id="IPR008136">
    <property type="entry name" value="CinA_C"/>
</dbReference>
<dbReference type="InterPro" id="IPR008135">
    <property type="entry name" value="Competence-induced_CinA"/>
</dbReference>
<dbReference type="InterPro" id="IPR036425">
    <property type="entry name" value="MoaB/Mog-like_dom_sf"/>
</dbReference>
<dbReference type="InterPro" id="IPR001453">
    <property type="entry name" value="MoaB/Mog_dom"/>
</dbReference>
<dbReference type="NCBIfam" id="TIGR00200">
    <property type="entry name" value="cinA_nterm"/>
    <property type="match status" value="1"/>
</dbReference>
<dbReference type="NCBIfam" id="TIGR00177">
    <property type="entry name" value="molyb_syn"/>
    <property type="match status" value="1"/>
</dbReference>
<dbReference type="NCBIfam" id="TIGR00199">
    <property type="entry name" value="PncC_domain"/>
    <property type="match status" value="1"/>
</dbReference>
<dbReference type="PANTHER" id="PTHR13939">
    <property type="entry name" value="NICOTINAMIDE-NUCLEOTIDE AMIDOHYDROLASE PNCC"/>
    <property type="match status" value="1"/>
</dbReference>
<dbReference type="PANTHER" id="PTHR13939:SF0">
    <property type="entry name" value="NMN AMIDOHYDROLASE-LIKE PROTEIN YFAY"/>
    <property type="match status" value="1"/>
</dbReference>
<dbReference type="Pfam" id="PF02464">
    <property type="entry name" value="CinA"/>
    <property type="match status" value="1"/>
</dbReference>
<dbReference type="Pfam" id="PF00994">
    <property type="entry name" value="MoCF_biosynth"/>
    <property type="match status" value="1"/>
</dbReference>
<dbReference type="PIRSF" id="PIRSF006728">
    <property type="entry name" value="CinA"/>
    <property type="match status" value="1"/>
</dbReference>
<dbReference type="SMART" id="SM00852">
    <property type="entry name" value="MoCF_biosynth"/>
    <property type="match status" value="1"/>
</dbReference>
<dbReference type="SUPFAM" id="SSF142433">
    <property type="entry name" value="CinA-like"/>
    <property type="match status" value="1"/>
</dbReference>
<dbReference type="SUPFAM" id="SSF53218">
    <property type="entry name" value="Molybdenum cofactor biosynthesis proteins"/>
    <property type="match status" value="1"/>
</dbReference>
<organism>
    <name type="scientific">Shewanella putrefaciens (strain CN-32 / ATCC BAA-453)</name>
    <dbReference type="NCBI Taxonomy" id="319224"/>
    <lineage>
        <taxon>Bacteria</taxon>
        <taxon>Pseudomonadati</taxon>
        <taxon>Pseudomonadota</taxon>
        <taxon>Gammaproteobacteria</taxon>
        <taxon>Alteromonadales</taxon>
        <taxon>Shewanellaceae</taxon>
        <taxon>Shewanella</taxon>
    </lineage>
</organism>
<protein>
    <recommendedName>
        <fullName evidence="1">CinA-like protein</fullName>
    </recommendedName>
</protein>
<name>CINAL_SHEPC</name>
<evidence type="ECO:0000255" key="1">
    <source>
        <dbReference type="HAMAP-Rule" id="MF_00226"/>
    </source>
</evidence>
<accession>A4YBU5</accession>
<feature type="chain" id="PRO_0000336526" description="CinA-like protein">
    <location>
        <begin position="1"/>
        <end position="424"/>
    </location>
</feature>
<gene>
    <name type="ordered locus">Sputcn32_3720</name>
</gene>
<comment type="similarity">
    <text evidence="1">Belongs to the CinA family.</text>
</comment>
<sequence length="424" mass="46207">MKLEMICTGEEVLSGQIVDTNAAWFASTMMEHGIEIQRRVTVGDRLEDLIAVFQERSLHADVILVNGGLGPTSDDMSAEAMAKAKGESLVENIEWRQQLEDWFTRNNREMPVSNLKQAMLPESAVMVDNPVGTACGFRVKLNRAWLFFTPGVPFELKHMVKEQFIPFIRDEFNLDAKVALKKLLTIGQGESALADKIEPLELPEGITIGYRSSMPHIEIKIFARGEKAIVLLPRVTGHVKMVLGTAVVAEDKATLAEEIHSRLLNSGLTLSVAESCTGGMITSQLVDFAGSSSYLHHGLVTYSNESKVRVLGVNPATLDDHGAVSIPTVEEMAKGARAILDSDFALATSGIAGPDGGTEDKPVGTVAIALATRNGVYSQMIKLPRRSRDLVRSLSAAVAYDMLRRELLAEAVIVDYQSIGRFSK</sequence>
<proteinExistence type="inferred from homology"/>